<organism>
    <name type="scientific">Listeria monocytogenes serotype 4b (strain F2365)</name>
    <dbReference type="NCBI Taxonomy" id="265669"/>
    <lineage>
        <taxon>Bacteria</taxon>
        <taxon>Bacillati</taxon>
        <taxon>Bacillota</taxon>
        <taxon>Bacilli</taxon>
        <taxon>Bacillales</taxon>
        <taxon>Listeriaceae</taxon>
        <taxon>Listeria</taxon>
    </lineage>
</organism>
<accession>Q71WH7</accession>
<protein>
    <recommendedName>
        <fullName evidence="1">Energy-coupling factor transporter ATP-binding protein EcfA1</fullName>
        <shortName evidence="1">ECF transporter A component EcfA1</shortName>
        <ecNumber evidence="1">7.-.-.-</ecNumber>
    </recommendedName>
</protein>
<reference key="1">
    <citation type="journal article" date="2004" name="Nucleic Acids Res.">
        <title>Whole genome comparisons of serotype 4b and 1/2a strains of the food-borne pathogen Listeria monocytogenes reveal new insights into the core genome components of this species.</title>
        <authorList>
            <person name="Nelson K.E."/>
            <person name="Fouts D.E."/>
            <person name="Mongodin E.F."/>
            <person name="Ravel J."/>
            <person name="DeBoy R.T."/>
            <person name="Kolonay J.F."/>
            <person name="Rasko D.A."/>
            <person name="Angiuoli S.V."/>
            <person name="Gill S.R."/>
            <person name="Paulsen I.T."/>
            <person name="Peterson J.D."/>
            <person name="White O."/>
            <person name="Nelson W.C."/>
            <person name="Nierman W.C."/>
            <person name="Beanan M.J."/>
            <person name="Brinkac L.M."/>
            <person name="Daugherty S.C."/>
            <person name="Dodson R.J."/>
            <person name="Durkin A.S."/>
            <person name="Madupu R."/>
            <person name="Haft D.H."/>
            <person name="Selengut J."/>
            <person name="Van Aken S.E."/>
            <person name="Khouri H.M."/>
            <person name="Fedorova N."/>
            <person name="Forberger H.A."/>
            <person name="Tran B."/>
            <person name="Kathariou S."/>
            <person name="Wonderling L.D."/>
            <person name="Uhlich G.A."/>
            <person name="Bayles D.O."/>
            <person name="Luchansky J.B."/>
            <person name="Fraser C.M."/>
        </authorList>
    </citation>
    <scope>NUCLEOTIDE SEQUENCE [LARGE SCALE GENOMIC DNA]</scope>
    <source>
        <strain>F2365</strain>
    </source>
</reference>
<dbReference type="EC" id="7.-.-.-" evidence="1"/>
<dbReference type="EMBL" id="AE017262">
    <property type="protein sequence ID" value="AAT05339.1"/>
    <property type="molecule type" value="Genomic_DNA"/>
</dbReference>
<dbReference type="RefSeq" id="WP_003740302.1">
    <property type="nucleotide sequence ID" value="NC_002973.6"/>
</dbReference>
<dbReference type="SMR" id="Q71WH7"/>
<dbReference type="DIP" id="DIP-61613N"/>
<dbReference type="IntAct" id="Q71WH7">
    <property type="interactions" value="1"/>
</dbReference>
<dbReference type="TCDB" id="3.A.1.25.8">
    <property type="family name" value="the atp-binding cassette (abc) superfamily"/>
</dbReference>
<dbReference type="KEGG" id="lmf:LMOf2365_2574"/>
<dbReference type="HOGENOM" id="CLU_000604_1_22_9"/>
<dbReference type="GO" id="GO:0043190">
    <property type="term" value="C:ATP-binding cassette (ABC) transporter complex"/>
    <property type="evidence" value="ECO:0007669"/>
    <property type="project" value="TreeGrafter"/>
</dbReference>
<dbReference type="GO" id="GO:0005524">
    <property type="term" value="F:ATP binding"/>
    <property type="evidence" value="ECO:0007669"/>
    <property type="project" value="UniProtKB-KW"/>
</dbReference>
<dbReference type="GO" id="GO:0016887">
    <property type="term" value="F:ATP hydrolysis activity"/>
    <property type="evidence" value="ECO:0007669"/>
    <property type="project" value="InterPro"/>
</dbReference>
<dbReference type="GO" id="GO:0042626">
    <property type="term" value="F:ATPase-coupled transmembrane transporter activity"/>
    <property type="evidence" value="ECO:0007669"/>
    <property type="project" value="TreeGrafter"/>
</dbReference>
<dbReference type="GO" id="GO:0015087">
    <property type="term" value="F:cobalt ion transmembrane transporter activity"/>
    <property type="evidence" value="ECO:0000304"/>
    <property type="project" value="JCVI"/>
</dbReference>
<dbReference type="GO" id="GO:0006824">
    <property type="term" value="P:cobalt ion transport"/>
    <property type="evidence" value="ECO:0000304"/>
    <property type="project" value="JCVI"/>
</dbReference>
<dbReference type="CDD" id="cd03225">
    <property type="entry name" value="ABC_cobalt_CbiO_domain1"/>
    <property type="match status" value="1"/>
</dbReference>
<dbReference type="FunFam" id="3.40.50.300:FF:000224">
    <property type="entry name" value="Energy-coupling factor transporter ATP-binding protein EcfA"/>
    <property type="match status" value="1"/>
</dbReference>
<dbReference type="Gene3D" id="3.40.50.300">
    <property type="entry name" value="P-loop containing nucleotide triphosphate hydrolases"/>
    <property type="match status" value="1"/>
</dbReference>
<dbReference type="InterPro" id="IPR003593">
    <property type="entry name" value="AAA+_ATPase"/>
</dbReference>
<dbReference type="InterPro" id="IPR003439">
    <property type="entry name" value="ABC_transporter-like_ATP-bd"/>
</dbReference>
<dbReference type="InterPro" id="IPR017871">
    <property type="entry name" value="ABC_transporter-like_CS"/>
</dbReference>
<dbReference type="InterPro" id="IPR015856">
    <property type="entry name" value="ABC_transpr_CbiO/EcfA_su"/>
</dbReference>
<dbReference type="InterPro" id="IPR050095">
    <property type="entry name" value="ECF_ABC_transporter_ATP-bd"/>
</dbReference>
<dbReference type="InterPro" id="IPR030947">
    <property type="entry name" value="EcfA_1"/>
</dbReference>
<dbReference type="InterPro" id="IPR027417">
    <property type="entry name" value="P-loop_NTPase"/>
</dbReference>
<dbReference type="NCBIfam" id="TIGR04520">
    <property type="entry name" value="ECF_ATPase_1"/>
    <property type="match status" value="1"/>
</dbReference>
<dbReference type="NCBIfam" id="NF010156">
    <property type="entry name" value="PRK13635.1"/>
    <property type="match status" value="1"/>
</dbReference>
<dbReference type="NCBIfam" id="NF010167">
    <property type="entry name" value="PRK13648.1"/>
    <property type="match status" value="1"/>
</dbReference>
<dbReference type="PANTHER" id="PTHR43553:SF24">
    <property type="entry name" value="ENERGY-COUPLING FACTOR TRANSPORTER ATP-BINDING PROTEIN ECFA1"/>
    <property type="match status" value="1"/>
</dbReference>
<dbReference type="PANTHER" id="PTHR43553">
    <property type="entry name" value="HEAVY METAL TRANSPORTER"/>
    <property type="match status" value="1"/>
</dbReference>
<dbReference type="Pfam" id="PF00005">
    <property type="entry name" value="ABC_tran"/>
    <property type="match status" value="1"/>
</dbReference>
<dbReference type="SMART" id="SM00382">
    <property type="entry name" value="AAA"/>
    <property type="match status" value="1"/>
</dbReference>
<dbReference type="SUPFAM" id="SSF52540">
    <property type="entry name" value="P-loop containing nucleoside triphosphate hydrolases"/>
    <property type="match status" value="1"/>
</dbReference>
<dbReference type="PROSITE" id="PS00211">
    <property type="entry name" value="ABC_TRANSPORTER_1"/>
    <property type="match status" value="1"/>
</dbReference>
<dbReference type="PROSITE" id="PS50893">
    <property type="entry name" value="ABC_TRANSPORTER_2"/>
    <property type="match status" value="1"/>
</dbReference>
<dbReference type="PROSITE" id="PS51246">
    <property type="entry name" value="CBIO"/>
    <property type="match status" value="1"/>
</dbReference>
<keyword id="KW-0067">ATP-binding</keyword>
<keyword id="KW-1003">Cell membrane</keyword>
<keyword id="KW-0472">Membrane</keyword>
<keyword id="KW-0547">Nucleotide-binding</keyword>
<keyword id="KW-1278">Translocase</keyword>
<keyword id="KW-0813">Transport</keyword>
<comment type="function">
    <text evidence="1">ATP-binding (A) component of a common energy-coupling factor (ECF) ABC-transporter complex. Unlike classic ABC transporters this ECF transporter provides the energy necessary to transport a number of different substrates.</text>
</comment>
<comment type="subunit">
    <text evidence="1">Forms a stable energy-coupling factor (ECF) transporter complex composed of 2 membrane-embedded substrate-binding proteins (S component), 2 ATP-binding proteins (A component) and 2 transmembrane proteins (T component).</text>
</comment>
<comment type="subcellular location">
    <subcellularLocation>
        <location evidence="1">Cell membrane</location>
        <topology evidence="1">Peripheral membrane protein</topology>
    </subcellularLocation>
</comment>
<comment type="similarity">
    <text evidence="1">Belongs to the ABC transporter superfamily. Energy-coupling factor EcfA family.</text>
</comment>
<evidence type="ECO:0000255" key="1">
    <source>
        <dbReference type="HAMAP-Rule" id="MF_01710"/>
    </source>
</evidence>
<gene>
    <name evidence="1" type="primary">ecfA1</name>
    <name type="synonym">cbiO1</name>
    <name type="ordered locus">LMOf2365_2574</name>
</gene>
<proteinExistence type="inferred from homology"/>
<name>ECFA1_LISMF</name>
<feature type="chain" id="PRO_0000092029" description="Energy-coupling factor transporter ATP-binding protein EcfA1">
    <location>
        <begin position="1"/>
        <end position="279"/>
    </location>
</feature>
<feature type="domain" description="ABC transporter" evidence="1">
    <location>
        <begin position="6"/>
        <end position="240"/>
    </location>
</feature>
<feature type="binding site" evidence="1">
    <location>
        <begin position="40"/>
        <end position="47"/>
    </location>
    <ligand>
        <name>ATP</name>
        <dbReference type="ChEBI" id="CHEBI:30616"/>
    </ligand>
</feature>
<sequence length="279" mass="30870">MAESFVRLEHVFYKYEDTEKYAVKDVSISAQKGEWVALVGHNGSGKSTIAKLLNGLLFPEDGLIKIGHFVLSEKNIWDIRRQVGMVFQNPDNQFVGATVQDDVAFGLENHGVPHDTMVERVESALNEVGMQSYALHEPARLSGGQKQRVAIAGVLALQPDVIILDEATSMLDPRGRAEVMETIRIMREQEDITVISITHDLDEVLFADRVIVMNNGEVHSEGTPQEIFEQADAMREIGLGVPFIIELQEKLVAGGFETGSTVLSEGALLDQLWKLNSNN</sequence>